<accession>A7WZ80</accession>
<feature type="chain" id="PRO_0000372216" description="Putative antiporter subunit mnhE2">
    <location>
        <begin position="1"/>
        <end position="160"/>
    </location>
</feature>
<feature type="transmembrane region" description="Helical" evidence="2">
    <location>
        <begin position="22"/>
        <end position="42"/>
    </location>
</feature>
<feature type="transmembrane region" description="Helical" evidence="2">
    <location>
        <begin position="55"/>
        <end position="75"/>
    </location>
</feature>
<feature type="transmembrane region" description="Helical" evidence="2">
    <location>
        <begin position="100"/>
        <end position="120"/>
    </location>
</feature>
<name>MNHE2_STAA1</name>
<protein>
    <recommendedName>
        <fullName>Putative antiporter subunit mnhE2</fullName>
    </recommendedName>
    <alternativeName>
        <fullName>Mrp complex subunit E2</fullName>
    </alternativeName>
    <alternativeName>
        <fullName>Putative NADH-ubiquinone oxidoreductase subunit mnhE2</fullName>
    </alternativeName>
</protein>
<sequence length="160" mass="18835">MNQIVLNIIIAFLWVLFQDEDHFKFSTFFSGYLIGLIVIYILHRFFSDDFYVRKIWVAIKFLGVYLYQLITSSISTINYILFKTKDMNPGLLSYETRLTSDWAITFLTILIIITPGSTVIRISQDSKKFFIHSIDVSEKEKDSLLRSIKHYEDLILEVSR</sequence>
<evidence type="ECO:0000250" key="1"/>
<evidence type="ECO:0000255" key="2"/>
<evidence type="ECO:0000305" key="3"/>
<keyword id="KW-0050">Antiport</keyword>
<keyword id="KW-1003">Cell membrane</keyword>
<keyword id="KW-0406">Ion transport</keyword>
<keyword id="KW-0472">Membrane</keyword>
<keyword id="KW-0812">Transmembrane</keyword>
<keyword id="KW-1133">Transmembrane helix</keyword>
<keyword id="KW-0813">Transport</keyword>
<dbReference type="EMBL" id="AP009324">
    <property type="protein sequence ID" value="BAF77506.1"/>
    <property type="molecule type" value="Genomic_DNA"/>
</dbReference>
<dbReference type="RefSeq" id="WP_001071971.1">
    <property type="nucleotide sequence ID" value="NC_009782.1"/>
</dbReference>
<dbReference type="SMR" id="A7WZ80"/>
<dbReference type="KEGG" id="saw:SAHV_0623"/>
<dbReference type="HOGENOM" id="CLU_086615_3_2_9"/>
<dbReference type="GO" id="GO:0005886">
    <property type="term" value="C:plasma membrane"/>
    <property type="evidence" value="ECO:0007669"/>
    <property type="project" value="UniProtKB-SubCell"/>
</dbReference>
<dbReference type="GO" id="GO:0015297">
    <property type="term" value="F:antiporter activity"/>
    <property type="evidence" value="ECO:0007669"/>
    <property type="project" value="UniProtKB-KW"/>
</dbReference>
<dbReference type="GO" id="GO:0008324">
    <property type="term" value="F:monoatomic cation transmembrane transporter activity"/>
    <property type="evidence" value="ECO:0007669"/>
    <property type="project" value="InterPro"/>
</dbReference>
<dbReference type="InterPro" id="IPR002758">
    <property type="entry name" value="Cation_antiport_E"/>
</dbReference>
<dbReference type="NCBIfam" id="NF006517">
    <property type="entry name" value="PRK08965.1-1"/>
    <property type="match status" value="1"/>
</dbReference>
<dbReference type="PANTHER" id="PTHR34584">
    <property type="entry name" value="NA(+)/H(+) ANTIPORTER SUBUNIT E1"/>
    <property type="match status" value="1"/>
</dbReference>
<dbReference type="PANTHER" id="PTHR34584:SF1">
    <property type="entry name" value="NA(+)_H(+) ANTIPORTER SUBUNIT E1"/>
    <property type="match status" value="1"/>
</dbReference>
<dbReference type="Pfam" id="PF01899">
    <property type="entry name" value="MNHE"/>
    <property type="match status" value="1"/>
</dbReference>
<dbReference type="PIRSF" id="PIRSF019239">
    <property type="entry name" value="MrpE"/>
    <property type="match status" value="1"/>
</dbReference>
<gene>
    <name type="primary">mnhE2</name>
    <name type="synonym">mrpE2</name>
    <name type="ordered locus">SAHV_0623</name>
</gene>
<proteinExistence type="inferred from homology"/>
<organism>
    <name type="scientific">Staphylococcus aureus (strain Mu3 / ATCC 700698)</name>
    <dbReference type="NCBI Taxonomy" id="418127"/>
    <lineage>
        <taxon>Bacteria</taxon>
        <taxon>Bacillati</taxon>
        <taxon>Bacillota</taxon>
        <taxon>Bacilli</taxon>
        <taxon>Bacillales</taxon>
        <taxon>Staphylococcaceae</taxon>
        <taxon>Staphylococcus</taxon>
    </lineage>
</organism>
<reference key="1">
    <citation type="journal article" date="2008" name="Antimicrob. Agents Chemother.">
        <title>Mutated response regulator graR is responsible for phenotypic conversion of Staphylococcus aureus from heterogeneous vancomycin-intermediate resistance to vancomycin-intermediate resistance.</title>
        <authorList>
            <person name="Neoh H.-M."/>
            <person name="Cui L."/>
            <person name="Yuzawa H."/>
            <person name="Takeuchi F."/>
            <person name="Matsuo M."/>
            <person name="Hiramatsu K."/>
        </authorList>
    </citation>
    <scope>NUCLEOTIDE SEQUENCE [LARGE SCALE GENOMIC DNA]</scope>
    <source>
        <strain>Mu3 / ATCC 700698</strain>
    </source>
</reference>
<comment type="subunit">
    <text evidence="1">May form a heterooligomeric complex that consists of seven subunits: mnhA2, mnhB2, mnhC2, mnhD2, mnhE2, mnhF2 and mnhG2.</text>
</comment>
<comment type="subcellular location">
    <subcellularLocation>
        <location evidence="3">Cell membrane</location>
        <topology evidence="3">Multi-pass membrane protein</topology>
    </subcellularLocation>
</comment>
<comment type="similarity">
    <text evidence="3">Belongs to the CPA3 antiporters (TC 2.A.63) subunit E family.</text>
</comment>